<comment type="function">
    <text evidence="2 5 6 7 8">Sodium-independent sulfate anion transporter (PubMed:12217875, PubMed:12590734, PubMed:20160351, PubMed:27210743). Can transport other anions including bicarbonate, thiosulfate and oxalate by mediating sulfate-hydrogencarbonate, sulfate-oxalate and oxalate-hydrogencarbonate anion exchange (PubMed:12217875, PubMed:12590734, PubMed:20160351, PubMed:27210743). Mediates sulfate-thiosulfate anion exchange (By similarity).</text>
</comment>
<comment type="catalytic activity">
    <reaction evidence="2">
        <text>thiosulfate(in) + sulfate(out) = thiosulfate(out) + sulfate(in)</text>
        <dbReference type="Rhea" id="RHEA:73215"/>
        <dbReference type="ChEBI" id="CHEBI:16189"/>
        <dbReference type="ChEBI" id="CHEBI:33542"/>
    </reaction>
</comment>
<comment type="catalytic activity">
    <reaction evidence="6 8">
        <text>2 hydrogencarbonate(out) + sulfate(in) = 2 hydrogencarbonate(in) + sulfate(out)</text>
        <dbReference type="Rhea" id="RHEA:72387"/>
        <dbReference type="ChEBI" id="CHEBI:16189"/>
        <dbReference type="ChEBI" id="CHEBI:17544"/>
    </reaction>
</comment>
<comment type="catalytic activity">
    <reaction evidence="5 6 7">
        <text>oxalate(in) + sulfate(out) = oxalate(out) + sulfate(in)</text>
        <dbReference type="Rhea" id="RHEA:72275"/>
        <dbReference type="ChEBI" id="CHEBI:16189"/>
        <dbReference type="ChEBI" id="CHEBI:30623"/>
    </reaction>
</comment>
<comment type="catalytic activity">
    <reaction evidence="8">
        <text>oxalate(in) + 2 hydrogencarbonate(out) = oxalate(out) + 2 hydrogencarbonate(in)</text>
        <dbReference type="Rhea" id="RHEA:72391"/>
        <dbReference type="ChEBI" id="CHEBI:17544"/>
        <dbReference type="ChEBI" id="CHEBI:30623"/>
    </reaction>
</comment>
<comment type="subcellular location">
    <subcellularLocation>
        <location evidence="8">Cell membrane</location>
        <topology evidence="3">Multi-pass membrane protein</topology>
    </subcellularLocation>
    <subcellularLocation>
        <location evidence="1">Basolateral cell membrane</location>
        <topology>Multi-pass membrane protein</topology>
    </subcellularLocation>
</comment>
<comment type="tissue specificity">
    <text evidence="6 7">Expressed in the heart, cecum, calvaria, brain, liver, skeletal muscle and kidney.</text>
</comment>
<comment type="disruption phenotype">
    <text evidence="7">Mice exhibit hyperoxaluria with hyperoxalemia, nephrocalcinosis and calcium oxalate stones in their renal tubules and bladder (PubMed:20160351). They also display hypersulfaturia, hyposulfatemia and enhanced acetaminophen-induced liver toxicity (PubMed:20160351).</text>
</comment>
<comment type="similarity">
    <text evidence="9">Belongs to the SLC26A/SulP transporter (TC 2.A.53) family.</text>
</comment>
<keyword id="KW-0039">Anion exchange</keyword>
<keyword id="KW-0050">Antiport</keyword>
<keyword id="KW-1003">Cell membrane</keyword>
<keyword id="KW-0325">Glycoprotein</keyword>
<keyword id="KW-0407">Ion channel</keyword>
<keyword id="KW-0406">Ion transport</keyword>
<keyword id="KW-0472">Membrane</keyword>
<keyword id="KW-0597">Phosphoprotein</keyword>
<keyword id="KW-1185">Reference proteome</keyword>
<keyword id="KW-0812">Transmembrane</keyword>
<keyword id="KW-1133">Transmembrane helix</keyword>
<keyword id="KW-0813">Transport</keyword>
<feature type="chain" id="PRO_0000080156" description="Sulfate anion transporter 1">
    <location>
        <begin position="1"/>
        <end position="704"/>
    </location>
</feature>
<feature type="transmembrane region" description="Helical" evidence="3">
    <location>
        <begin position="68"/>
        <end position="90"/>
    </location>
</feature>
<feature type="transmembrane region" description="Helical" evidence="3">
    <location>
        <begin position="94"/>
        <end position="116"/>
    </location>
</feature>
<feature type="transmembrane region" description="Helical" evidence="3">
    <location>
        <begin position="185"/>
        <end position="207"/>
    </location>
</feature>
<feature type="transmembrane region" description="Helical" evidence="3">
    <location>
        <begin position="260"/>
        <end position="282"/>
    </location>
</feature>
<feature type="transmembrane region" description="Helical" evidence="3">
    <location>
        <begin position="295"/>
        <end position="314"/>
    </location>
</feature>
<feature type="transmembrane region" description="Helical" evidence="3">
    <location>
        <begin position="347"/>
        <end position="369"/>
    </location>
</feature>
<feature type="transmembrane region" description="Helical" evidence="3">
    <location>
        <begin position="382"/>
        <end position="404"/>
    </location>
</feature>
<feature type="transmembrane region" description="Helical" evidence="3">
    <location>
        <begin position="417"/>
        <end position="439"/>
    </location>
</feature>
<feature type="transmembrane region" description="Helical" evidence="3">
    <location>
        <begin position="477"/>
        <end position="499"/>
    </location>
</feature>
<feature type="domain" description="STAS" evidence="4">
    <location>
        <begin position="532"/>
        <end position="690"/>
    </location>
</feature>
<feature type="modified residue" description="Phosphothreonine" evidence="1">
    <location>
        <position position="13"/>
    </location>
</feature>
<feature type="modified residue" description="Phosphoserine" evidence="10 11">
    <location>
        <position position="587"/>
    </location>
</feature>
<feature type="modified residue" description="Phosphoserine" evidence="1">
    <location>
        <position position="590"/>
    </location>
</feature>
<feature type="glycosylation site" description="N-linked (GlcNAc...) asparagine" evidence="3">
    <location>
        <position position="158"/>
    </location>
</feature>
<feature type="glycosylation site" description="N-linked (GlcNAc...) asparagine" evidence="3">
    <location>
        <position position="163"/>
    </location>
</feature>
<feature type="glycosylation site" description="N-linked (GlcNAc...) asparagine" evidence="3">
    <location>
        <position position="588"/>
    </location>
</feature>
<feature type="mutagenesis site" description="Decreased sulfate-hydrogencarbonate exchange activity. Does not affect localization to plasma membrane." evidence="8">
    <original>A</original>
    <variation>T</variation>
    <location>
        <position position="56"/>
    </location>
</feature>
<feature type="mutagenesis site" description="Decreased sulfate-hydrogencarbonate exchange activity. Loss of localization to plasma membrane." evidence="8">
    <original>T</original>
    <variation>M</variation>
    <location>
        <position position="190"/>
    </location>
</feature>
<feature type="mutagenesis site" description="Decreased sulfate-hydrogencarbonate exchange activity. Increased accumulation of protein in ER." evidence="8">
    <original>S</original>
    <variation>L</variation>
    <location>
        <position position="363"/>
    </location>
</feature>
<feature type="sequence conflict" description="In Ref. 1; AAM18183." evidence="9" ref="1">
    <original>Q</original>
    <variation>P</variation>
    <location>
        <position position="8"/>
    </location>
</feature>
<feature type="sequence conflict" description="In Ref. 1; AAM18183." evidence="9" ref="1">
    <original>M</original>
    <variation>T</variation>
    <location>
        <position position="222"/>
    </location>
</feature>
<dbReference type="EMBL" id="AY093420">
    <property type="protein sequence ID" value="AAM18183.1"/>
    <property type="molecule type" value="mRNA"/>
</dbReference>
<dbReference type="EMBL" id="BC032151">
    <property type="protein sequence ID" value="AAH32151.1"/>
    <property type="molecule type" value="mRNA"/>
</dbReference>
<dbReference type="EMBL" id="BC022130">
    <property type="protein sequence ID" value="AAH22130.1"/>
    <property type="molecule type" value="mRNA"/>
</dbReference>
<dbReference type="EMBL" id="BC025824">
    <property type="protein sequence ID" value="AAH25824.1"/>
    <property type="molecule type" value="mRNA"/>
</dbReference>
<dbReference type="CCDS" id="CCDS19517.1"/>
<dbReference type="RefSeq" id="NP_001297621.1">
    <property type="nucleotide sequence ID" value="NM_001310692.1"/>
</dbReference>
<dbReference type="RefSeq" id="NP_777359.3">
    <property type="nucleotide sequence ID" value="NM_174870.4"/>
</dbReference>
<dbReference type="RefSeq" id="XP_006534974.1">
    <property type="nucleotide sequence ID" value="XM_006534911.1"/>
</dbReference>
<dbReference type="RefSeq" id="XP_011247743.1">
    <property type="nucleotide sequence ID" value="XM_011249441.2"/>
</dbReference>
<dbReference type="RefSeq" id="XP_017176343.1">
    <property type="nucleotide sequence ID" value="XM_017320854.1"/>
</dbReference>
<dbReference type="RefSeq" id="XP_017176344.1">
    <property type="nucleotide sequence ID" value="XM_017320855.2"/>
</dbReference>
<dbReference type="RefSeq" id="XP_017176345.1">
    <property type="nucleotide sequence ID" value="XM_017320856.2"/>
</dbReference>
<dbReference type="RefSeq" id="XP_030110271.1">
    <property type="nucleotide sequence ID" value="XM_030254411.1"/>
</dbReference>
<dbReference type="RefSeq" id="XP_030110272.1">
    <property type="nucleotide sequence ID" value="XM_030254412.1"/>
</dbReference>
<dbReference type="RefSeq" id="XP_030110273.1">
    <property type="nucleotide sequence ID" value="XM_030254413.2"/>
</dbReference>
<dbReference type="RefSeq" id="XP_030110274.1">
    <property type="nucleotide sequence ID" value="XM_030254414.1"/>
</dbReference>
<dbReference type="RefSeq" id="XP_036020974.1">
    <property type="nucleotide sequence ID" value="XM_036165081.1"/>
</dbReference>
<dbReference type="RefSeq" id="XP_036020975.1">
    <property type="nucleotide sequence ID" value="XM_036165082.1"/>
</dbReference>
<dbReference type="SMR" id="P58735"/>
<dbReference type="BioGRID" id="231138">
    <property type="interactions" value="7"/>
</dbReference>
<dbReference type="FunCoup" id="P58735">
    <property type="interactions" value="110"/>
</dbReference>
<dbReference type="STRING" id="10090.ENSMUSP00000113185"/>
<dbReference type="BindingDB" id="P58735"/>
<dbReference type="ChEMBL" id="CHEMBL2176770"/>
<dbReference type="GlyCosmos" id="P58735">
    <property type="glycosylation" value="3 sites, No reported glycans"/>
</dbReference>
<dbReference type="GlyGen" id="P58735">
    <property type="glycosylation" value="5 sites, 1 O-linked glycan (2 sites)"/>
</dbReference>
<dbReference type="iPTMnet" id="P58735"/>
<dbReference type="PhosphoSitePlus" id="P58735"/>
<dbReference type="SwissPalm" id="P58735"/>
<dbReference type="jPOST" id="P58735"/>
<dbReference type="PaxDb" id="10090-ENSMUSP00000051561"/>
<dbReference type="ProteomicsDB" id="256871"/>
<dbReference type="Antibodypedia" id="8230">
    <property type="antibodies" value="101 antibodies from 26 providers"/>
</dbReference>
<dbReference type="DNASU" id="231583"/>
<dbReference type="Ensembl" id="ENSMUST00000051757.14">
    <property type="protein sequence ID" value="ENSMUSP00000051561.8"/>
    <property type="gene ID" value="ENSMUSG00000046959.17"/>
</dbReference>
<dbReference type="Ensembl" id="ENSMUST00000163328.8">
    <property type="protein sequence ID" value="ENSMUSP00000131282.2"/>
    <property type="gene ID" value="ENSMUSG00000046959.17"/>
</dbReference>
<dbReference type="GeneID" id="231583"/>
<dbReference type="KEGG" id="mmu:231583"/>
<dbReference type="UCSC" id="uc008yoy.3">
    <property type="organism name" value="mouse"/>
</dbReference>
<dbReference type="AGR" id="MGI:2385894"/>
<dbReference type="CTD" id="10861"/>
<dbReference type="MGI" id="MGI:2385894">
    <property type="gene designation" value="Slc26a1"/>
</dbReference>
<dbReference type="VEuPathDB" id="HostDB:ENSMUSG00000046959"/>
<dbReference type="eggNOG" id="KOG0236">
    <property type="taxonomic scope" value="Eukaryota"/>
</dbReference>
<dbReference type="GeneTree" id="ENSGT01120000271864"/>
<dbReference type="HOGENOM" id="CLU_003182_9_4_1"/>
<dbReference type="InParanoid" id="P58735"/>
<dbReference type="OrthoDB" id="288203at2759"/>
<dbReference type="PhylomeDB" id="P58735"/>
<dbReference type="TreeFam" id="TF313784"/>
<dbReference type="Reactome" id="R-MMU-174362">
    <property type="pathway name" value="Transport and synthesis of PAPS"/>
</dbReference>
<dbReference type="Reactome" id="R-MMU-427601">
    <property type="pathway name" value="Multifunctional anion exchangers"/>
</dbReference>
<dbReference type="BioGRID-ORCS" id="231583">
    <property type="hits" value="1 hit in 77 CRISPR screens"/>
</dbReference>
<dbReference type="ChiTaRS" id="Slc26a1">
    <property type="organism name" value="mouse"/>
</dbReference>
<dbReference type="PRO" id="PR:P58735"/>
<dbReference type="Proteomes" id="UP000000589">
    <property type="component" value="Chromosome 5"/>
</dbReference>
<dbReference type="RNAct" id="P58735">
    <property type="molecule type" value="protein"/>
</dbReference>
<dbReference type="Bgee" id="ENSMUSG00000046959">
    <property type="expression patterns" value="Expressed in right kidney and 70 other cell types or tissues"/>
</dbReference>
<dbReference type="ExpressionAtlas" id="P58735">
    <property type="expression patterns" value="baseline and differential"/>
</dbReference>
<dbReference type="GO" id="GO:0016323">
    <property type="term" value="C:basolateral plasma membrane"/>
    <property type="evidence" value="ECO:0000314"/>
    <property type="project" value="UniProtKB"/>
</dbReference>
<dbReference type="GO" id="GO:0005886">
    <property type="term" value="C:plasma membrane"/>
    <property type="evidence" value="ECO:0000314"/>
    <property type="project" value="UniProtKB"/>
</dbReference>
<dbReference type="GO" id="GO:0015108">
    <property type="term" value="F:chloride transmembrane transporter activity"/>
    <property type="evidence" value="ECO:0000314"/>
    <property type="project" value="UniProtKB"/>
</dbReference>
<dbReference type="GO" id="GO:0019531">
    <property type="term" value="F:oxalate transmembrane transporter activity"/>
    <property type="evidence" value="ECO:0000314"/>
    <property type="project" value="UniProtKB"/>
</dbReference>
<dbReference type="GO" id="GO:0015116">
    <property type="term" value="F:sulfate transmembrane transporter activity"/>
    <property type="evidence" value="ECO:0000314"/>
    <property type="project" value="UniProtKB"/>
</dbReference>
<dbReference type="GO" id="GO:0015383">
    <property type="term" value="F:sulfate:bicarbonate antiporter activity"/>
    <property type="evidence" value="ECO:0000314"/>
    <property type="project" value="UniProtKB"/>
</dbReference>
<dbReference type="GO" id="GO:0006821">
    <property type="term" value="P:chloride transport"/>
    <property type="evidence" value="ECO:0000314"/>
    <property type="project" value="UniProtKB"/>
</dbReference>
<dbReference type="GO" id="GO:0019532">
    <property type="term" value="P:oxalate transport"/>
    <property type="evidence" value="ECO:0000314"/>
    <property type="project" value="UniProtKB"/>
</dbReference>
<dbReference type="GO" id="GO:1902358">
    <property type="term" value="P:sulfate transmembrane transport"/>
    <property type="evidence" value="ECO:0000314"/>
    <property type="project" value="UniProtKB"/>
</dbReference>
<dbReference type="CDD" id="cd07042">
    <property type="entry name" value="STAS_SulP_like_sulfate_transporter"/>
    <property type="match status" value="1"/>
</dbReference>
<dbReference type="Gene3D" id="3.30.750.24">
    <property type="entry name" value="STAS domain"/>
    <property type="match status" value="1"/>
</dbReference>
<dbReference type="InterPro" id="IPR018045">
    <property type="entry name" value="S04_transporter_CS"/>
</dbReference>
<dbReference type="InterPro" id="IPR011547">
    <property type="entry name" value="SLC26A/SulP_dom"/>
</dbReference>
<dbReference type="InterPro" id="IPR001902">
    <property type="entry name" value="SLC26A/SulP_fam"/>
</dbReference>
<dbReference type="InterPro" id="IPR002645">
    <property type="entry name" value="STAS_dom"/>
</dbReference>
<dbReference type="InterPro" id="IPR036513">
    <property type="entry name" value="STAS_dom_sf"/>
</dbReference>
<dbReference type="NCBIfam" id="TIGR00815">
    <property type="entry name" value="sulP"/>
    <property type="match status" value="1"/>
</dbReference>
<dbReference type="PANTHER" id="PTHR11814">
    <property type="entry name" value="SULFATE TRANSPORTER"/>
    <property type="match status" value="1"/>
</dbReference>
<dbReference type="Pfam" id="PF01740">
    <property type="entry name" value="STAS"/>
    <property type="match status" value="1"/>
</dbReference>
<dbReference type="Pfam" id="PF00916">
    <property type="entry name" value="Sulfate_transp"/>
    <property type="match status" value="1"/>
</dbReference>
<dbReference type="SUPFAM" id="SSF52091">
    <property type="entry name" value="SpoIIaa-like"/>
    <property type="match status" value="1"/>
</dbReference>
<dbReference type="PROSITE" id="PS01130">
    <property type="entry name" value="SLC26A"/>
    <property type="match status" value="1"/>
</dbReference>
<dbReference type="PROSITE" id="PS50801">
    <property type="entry name" value="STAS"/>
    <property type="match status" value="1"/>
</dbReference>
<proteinExistence type="evidence at protein level"/>
<reference key="1">
    <citation type="journal article" date="2003" name="DNA Cell Biol.">
        <title>The mouse sulfate anion transporter gene Sat1 (Slc26a1): cloning, tissue distribution, gene structure, functional characterization, and transcriptional regulation thyroid hormone.</title>
        <authorList>
            <person name="Lee A."/>
            <person name="Beck L."/>
            <person name="Markovich D."/>
        </authorList>
    </citation>
    <scope>NUCLEOTIDE SEQUENCE [MRNA]</scope>
    <scope>FUNCTION</scope>
    <scope>TRANSPORTER ACTIVITY</scope>
    <scope>TISSUE SPECIFICITY</scope>
</reference>
<reference key="2">
    <citation type="journal article" date="2004" name="Genome Res.">
        <title>The status, quality, and expansion of the NIH full-length cDNA project: the Mammalian Gene Collection (MGC).</title>
        <authorList>
            <consortium name="The MGC Project Team"/>
        </authorList>
    </citation>
    <scope>NUCLEOTIDE SEQUENCE [LARGE SCALE MRNA]</scope>
    <source>
        <strain>FVB/N</strain>
        <tissue>Liver</tissue>
    </source>
</reference>
<reference key="3">
    <citation type="journal article" date="2002" name="Am. J. Physiol.">
        <title>Molecular characterization of the murine Slc26a6 anion exchanger: functional comparison with Slc26a1.</title>
        <authorList>
            <person name="Xie Q."/>
            <person name="Welch R."/>
            <person name="Mercado A."/>
            <person name="Romero M.F."/>
            <person name="Mount D.B."/>
        </authorList>
    </citation>
    <scope>FUNCTION</scope>
    <scope>TRANSPORTER ACTIVITY</scope>
</reference>
<reference key="4">
    <citation type="journal article" date="2007" name="Proc. Natl. Acad. Sci. U.S.A.">
        <title>Large-scale phosphorylation analysis of mouse liver.</title>
        <authorList>
            <person name="Villen J."/>
            <person name="Beausoleil S.A."/>
            <person name="Gerber S.A."/>
            <person name="Gygi S.P."/>
        </authorList>
    </citation>
    <scope>PHOSPHORYLATION [LARGE SCALE ANALYSIS] AT SER-587</scope>
    <scope>IDENTIFICATION BY MASS SPECTROMETRY [LARGE SCALE ANALYSIS]</scope>
    <source>
        <tissue>Liver</tissue>
    </source>
</reference>
<reference key="5">
    <citation type="journal article" date="2010" name="Cell">
        <title>A tissue-specific atlas of mouse protein phosphorylation and expression.</title>
        <authorList>
            <person name="Huttlin E.L."/>
            <person name="Jedrychowski M.P."/>
            <person name="Elias J.E."/>
            <person name="Goswami T."/>
            <person name="Rad R."/>
            <person name="Beausoleil S.A."/>
            <person name="Villen J."/>
            <person name="Haas W."/>
            <person name="Sowa M.E."/>
            <person name="Gygi S.P."/>
        </authorList>
    </citation>
    <scope>PHOSPHORYLATION [LARGE SCALE ANALYSIS] AT SER-587</scope>
    <scope>IDENTIFICATION BY MASS SPECTROMETRY [LARGE SCALE ANALYSIS]</scope>
    <source>
        <tissue>Kidney</tissue>
        <tissue>Liver</tissue>
    </source>
</reference>
<reference key="6">
    <citation type="journal article" date="2010" name="J. Clin. Invest.">
        <title>Urolithiasis and hepatotoxicity are linked to the anion transporter Sat1 in mice.</title>
        <authorList>
            <person name="Dawson P.A."/>
            <person name="Russell C.S."/>
            <person name="Lee S."/>
            <person name="McLeay S.C."/>
            <person name="van Dongen J.M."/>
            <person name="Cowley D.M."/>
            <person name="Clarke L.A."/>
            <person name="Markovich D."/>
        </authorList>
    </citation>
    <scope>FUNCTION</scope>
    <scope>TRANSPORTER ACTIVITY</scope>
    <scope>DISRUPTION PHENOTYPE</scope>
    <scope>TISSUE SPECIFICITY</scope>
</reference>
<reference key="7">
    <citation type="journal article" date="2016" name="Am. J. Hum. Genet.">
        <title>Mutations in SLC26A1 Cause Nephrolithiasis.</title>
        <authorList>
            <person name="Gee H.Y."/>
            <person name="Jun I."/>
            <person name="Braun D.A."/>
            <person name="Lawson J.A."/>
            <person name="Halbritter J."/>
            <person name="Shril S."/>
            <person name="Nelson C.P."/>
            <person name="Tan W."/>
            <person name="Stein D."/>
            <person name="Wassner A.J."/>
            <person name="Ferguson M.A."/>
            <person name="Gucev Z."/>
            <person name="Sayer J.A."/>
            <person name="Milosevic D."/>
            <person name="Baum M."/>
            <person name="Tasic V."/>
            <person name="Lee M.G."/>
            <person name="Hildebrandt F."/>
        </authorList>
    </citation>
    <scope>FUNCTION</scope>
    <scope>SUBCELLULAR LOCATION</scope>
    <scope>MUTAGENESIS OF ALA-56; THR-190 AND SER-363</scope>
    <scope>TRANSPORTER ACTIVITY</scope>
</reference>
<name>S26A1_MOUSE</name>
<accession>P58735</accession>
<accession>Q80WF6</accession>
<protein>
    <recommendedName>
        <fullName>Sulfate anion transporter 1</fullName>
        <shortName>SAT-1</shortName>
    </recommendedName>
    <alternativeName>
        <fullName>Solute carrier family 26 member 1</fullName>
    </alternativeName>
</protein>
<evidence type="ECO:0000250" key="1">
    <source>
        <dbReference type="UniProtKB" id="P45380"/>
    </source>
</evidence>
<evidence type="ECO:0000250" key="2">
    <source>
        <dbReference type="UniProtKB" id="Q9H2B4"/>
    </source>
</evidence>
<evidence type="ECO:0000255" key="3"/>
<evidence type="ECO:0000255" key="4">
    <source>
        <dbReference type="PROSITE-ProRule" id="PRU00198"/>
    </source>
</evidence>
<evidence type="ECO:0000269" key="5">
    <source>
    </source>
</evidence>
<evidence type="ECO:0000269" key="6">
    <source>
    </source>
</evidence>
<evidence type="ECO:0000269" key="7">
    <source>
    </source>
</evidence>
<evidence type="ECO:0000269" key="8">
    <source>
    </source>
</evidence>
<evidence type="ECO:0000305" key="9"/>
<evidence type="ECO:0007744" key="10">
    <source>
    </source>
</evidence>
<evidence type="ECO:0007744" key="11">
    <source>
    </source>
</evidence>
<sequence length="704" mass="75788">MDASPEPQQKGGTLVLVRRQPPVSQGLLETLKARLKKSCTCSMPCAQALVQGLFPAIHWLPQYRLKEYLAGDVMSGLVIGIILVPQAIAYSLLAGLQPIYSLYTSFFANLIYFLMGTSRHVNVGIFSLLCLMVGQVVDRELQLAGFDPSQDSLGPKNNDSTLNNSATTLIIGLQDCRRDCYAIRVATALTLMAGLYQVLMGILRLGFVSTYLSQPLLDGFAMGASVTILTSQAKHMLGVQIPRHQGLGMVVHTWLSLLQNVGQANICDVVTSALCLGVLLAAKELSDRYRHRLKVPIPTELFVIVVATIVSHFGQLHTRFDSRVAGNIPTGFVAPQVPDPKIMWRVALDAMSLALVGSAFSISLAEMFARSHGYSVSANQELLAVGCCNVLPAFFHCFATSAALSKTLVKIATGCQTQLSSVVSAAVVLLVLLVLAPLFHDLQRCVLACIIVVSLRGALRKVKDLPQLWRLSPADALVWVATAATCVLVSTEAGLLAGVFFSLLSLAGRTQRPRAALLARIGDSTFYEDAAEFEGLLPPPEVRVFRFTGPLYYANKDFFLRSLYRLTGLDAGHSATRKDQGPEVGVSNRSLVDGKDLGSVSSGAGLVVPLAFGFHTVVIDCAPLLFLDVAGMATLKDLRRDYRALDITLLLACCSPSVRDTLRKGGFLGEEQGAENELLFPSVHSAVEAACARREELLAADSAL</sequence>
<gene>
    <name type="primary">Slc26a1</name>
    <name type="synonym">Sat1</name>
</gene>
<organism>
    <name type="scientific">Mus musculus</name>
    <name type="common">Mouse</name>
    <dbReference type="NCBI Taxonomy" id="10090"/>
    <lineage>
        <taxon>Eukaryota</taxon>
        <taxon>Metazoa</taxon>
        <taxon>Chordata</taxon>
        <taxon>Craniata</taxon>
        <taxon>Vertebrata</taxon>
        <taxon>Euteleostomi</taxon>
        <taxon>Mammalia</taxon>
        <taxon>Eutheria</taxon>
        <taxon>Euarchontoglires</taxon>
        <taxon>Glires</taxon>
        <taxon>Rodentia</taxon>
        <taxon>Myomorpha</taxon>
        <taxon>Muroidea</taxon>
        <taxon>Muridae</taxon>
        <taxon>Murinae</taxon>
        <taxon>Mus</taxon>
        <taxon>Mus</taxon>
    </lineage>
</organism>